<feature type="chain" id="PRO_0000120328" description="E3 ubiquitin-protein ligase SMURF1">
    <location>
        <begin position="1"/>
        <end position="731"/>
    </location>
</feature>
<feature type="domain" description="C2" evidence="3">
    <location>
        <begin position="1"/>
        <end position="120"/>
    </location>
</feature>
<feature type="domain" description="WW 1" evidence="5">
    <location>
        <begin position="233"/>
        <end position="266"/>
    </location>
</feature>
<feature type="domain" description="WW 2" evidence="5">
    <location>
        <begin position="279"/>
        <end position="312"/>
    </location>
</feature>
<feature type="domain" description="HECT" evidence="4">
    <location>
        <begin position="394"/>
        <end position="731"/>
    </location>
</feature>
<feature type="region of interest" description="Disordered" evidence="6">
    <location>
        <begin position="210"/>
        <end position="235"/>
    </location>
</feature>
<feature type="compositionally biased region" description="Polar residues" evidence="6">
    <location>
        <begin position="221"/>
        <end position="234"/>
    </location>
</feature>
<feature type="active site" description="Glycyl thioester intermediate" evidence="4">
    <location>
        <position position="699"/>
    </location>
</feature>
<organism>
    <name type="scientific">Xenopus laevis</name>
    <name type="common">African clawed frog</name>
    <dbReference type="NCBI Taxonomy" id="8355"/>
    <lineage>
        <taxon>Eukaryota</taxon>
        <taxon>Metazoa</taxon>
        <taxon>Chordata</taxon>
        <taxon>Craniata</taxon>
        <taxon>Vertebrata</taxon>
        <taxon>Euteleostomi</taxon>
        <taxon>Amphibia</taxon>
        <taxon>Batrachia</taxon>
        <taxon>Anura</taxon>
        <taxon>Pipoidea</taxon>
        <taxon>Pipidae</taxon>
        <taxon>Xenopodinae</taxon>
        <taxon>Xenopus</taxon>
        <taxon>Xenopus</taxon>
    </lineage>
</organism>
<evidence type="ECO:0000250" key="1"/>
<evidence type="ECO:0000250" key="2">
    <source>
        <dbReference type="UniProtKB" id="Q9HCE7"/>
    </source>
</evidence>
<evidence type="ECO:0000255" key="3">
    <source>
        <dbReference type="PROSITE-ProRule" id="PRU00041"/>
    </source>
</evidence>
<evidence type="ECO:0000255" key="4">
    <source>
        <dbReference type="PROSITE-ProRule" id="PRU00104"/>
    </source>
</evidence>
<evidence type="ECO:0000255" key="5">
    <source>
        <dbReference type="PROSITE-ProRule" id="PRU00224"/>
    </source>
</evidence>
<evidence type="ECO:0000256" key="6">
    <source>
        <dbReference type="SAM" id="MobiDB-lite"/>
    </source>
</evidence>
<evidence type="ECO:0000269" key="7">
    <source>
    </source>
</evidence>
<protein>
    <recommendedName>
        <fullName>E3 ubiquitin-protein ligase SMURF1</fullName>
        <shortName>xSMURF1</shortName>
        <ecNumber evidence="2">2.3.2.26</ecNumber>
    </recommendedName>
    <alternativeName>
        <fullName>HECT-type E3 ubiquitin transferase SMURF1</fullName>
    </alternativeName>
    <alternativeName>
        <fullName>SMAD ubiquitination regulatory factor 1</fullName>
    </alternativeName>
    <alternativeName>
        <fullName>SMAD-specific E3 ubiquitin-protein ligase 1</fullName>
    </alternativeName>
</protein>
<proteinExistence type="evidence at transcript level"/>
<name>SMUF1_XENLA</name>
<gene>
    <name type="primary">smurf1</name>
</gene>
<keyword id="KW-1003">Cell membrane</keyword>
<keyword id="KW-0963">Cytoplasm</keyword>
<keyword id="KW-0221">Differentiation</keyword>
<keyword id="KW-0472">Membrane</keyword>
<keyword id="KW-1185">Reference proteome</keyword>
<keyword id="KW-0677">Repeat</keyword>
<keyword id="KW-0808">Transferase</keyword>
<keyword id="KW-0833">Ubl conjugation pathway</keyword>
<accession>Q9PUN2</accession>
<accession>Q6GPK6</accession>
<reference key="1">
    <citation type="journal article" date="1999" name="Nature">
        <title>A SMAD ubiquitin ligase targets the BMP pathway and affects embryonic pattern formation.</title>
        <authorList>
            <person name="Zhu H."/>
            <person name="Kavsak P."/>
            <person name="Abdollah S."/>
            <person name="Wrana J.L."/>
            <person name="Thomsen G.H."/>
        </authorList>
    </citation>
    <scope>NUCLEOTIDE SEQUENCE [MRNA]</scope>
    <scope>DEVELOPMENTAL STAGE</scope>
    <source>
        <tissue>Blastula</tissue>
    </source>
</reference>
<reference key="2">
    <citation type="submission" date="2004-06" db="EMBL/GenBank/DDBJ databases">
        <authorList>
            <consortium name="NIH - Xenopus Gene Collection (XGC) project"/>
        </authorList>
    </citation>
    <scope>NUCLEOTIDE SEQUENCE [LARGE SCALE MRNA]</scope>
    <source>
        <tissue>Oocyte</tissue>
    </source>
</reference>
<comment type="function">
    <text evidence="2">E3 ubiquitin-protein ligase that acts as a negative regulator of BMP signaling pathway. Mediates ubiquitination and degradation of smad1 and smad5, 2 receptor-regulated SMADs specific for the BMP pathway. Promotes ubiquitination and subsequent proteasomal degradation of TRAF family members and rhoa. May play a role in dendrite formation by melanocytes.</text>
</comment>
<comment type="catalytic activity">
    <reaction evidence="2">
        <text>S-ubiquitinyl-[E2 ubiquitin-conjugating enzyme]-L-cysteine + [acceptor protein]-L-lysine = [E2 ubiquitin-conjugating enzyme]-L-cysteine + N(6)-ubiquitinyl-[acceptor protein]-L-lysine.</text>
        <dbReference type="EC" id="2.3.2.26"/>
    </reaction>
</comment>
<comment type="pathway">
    <text>Protein modification; protein ubiquitination.</text>
</comment>
<comment type="subcellular location">
    <subcellularLocation>
        <location evidence="1">Cytoplasm</location>
    </subcellularLocation>
    <subcellularLocation>
        <location evidence="1">Cell membrane</location>
        <topology evidence="1">Peripheral membrane protein</topology>
        <orientation evidence="1">Cytoplasmic side</orientation>
    </subcellularLocation>
</comment>
<comment type="developmental stage">
    <text evidence="7">Expressed from the egg stage to the swimming tadpole, with maximum levels observed in the stages from egg to gastrula. At gastrulation distributed uniformly in embryonic ectoderm and involuting mesoderm, and expression gradually localizes to the nervous system. At early tadpole stages expressed in the CNS, eye, branchial arches, kidney and somites.</text>
</comment>
<comment type="domain">
    <text evidence="1">The C2 domain mediates membrane localization and substrate selection.</text>
</comment>
<dbReference type="EC" id="2.3.2.26" evidence="2"/>
<dbReference type="EMBL" id="AF169310">
    <property type="protein sequence ID" value="AAD52564.1"/>
    <property type="molecule type" value="mRNA"/>
</dbReference>
<dbReference type="EMBL" id="BC073111">
    <property type="protein sequence ID" value="AAH73111.1"/>
    <property type="molecule type" value="mRNA"/>
</dbReference>
<dbReference type="RefSeq" id="NP_001081939.1">
    <property type="nucleotide sequence ID" value="NM_001088470.1"/>
</dbReference>
<dbReference type="BMRB" id="Q9PUN2"/>
<dbReference type="SMR" id="Q9PUN2"/>
<dbReference type="BioGRID" id="99466">
    <property type="interactions" value="1"/>
</dbReference>
<dbReference type="DNASU" id="398131"/>
<dbReference type="GeneID" id="398131"/>
<dbReference type="KEGG" id="xla:398131"/>
<dbReference type="AGR" id="Xenbase:XB-GENE-479050"/>
<dbReference type="CTD" id="398131"/>
<dbReference type="Xenbase" id="XB-GENE-479050">
    <property type="gene designation" value="smurf1.L"/>
</dbReference>
<dbReference type="OrthoDB" id="8068875at2759"/>
<dbReference type="UniPathway" id="UPA00143"/>
<dbReference type="Proteomes" id="UP000186698">
    <property type="component" value="Chromosome 9_10L"/>
</dbReference>
<dbReference type="GO" id="GO:0005737">
    <property type="term" value="C:cytoplasm"/>
    <property type="evidence" value="ECO:0000250"/>
    <property type="project" value="UniProtKB"/>
</dbReference>
<dbReference type="GO" id="GO:0005886">
    <property type="term" value="C:plasma membrane"/>
    <property type="evidence" value="ECO:0007669"/>
    <property type="project" value="UniProtKB-SubCell"/>
</dbReference>
<dbReference type="GO" id="GO:0046332">
    <property type="term" value="F:SMAD binding"/>
    <property type="evidence" value="ECO:0000318"/>
    <property type="project" value="GO_Central"/>
</dbReference>
<dbReference type="GO" id="GO:0061630">
    <property type="term" value="F:ubiquitin protein ligase activity"/>
    <property type="evidence" value="ECO:0000318"/>
    <property type="project" value="GO_Central"/>
</dbReference>
<dbReference type="GO" id="GO:0004842">
    <property type="term" value="F:ubiquitin-protein transferase activity"/>
    <property type="evidence" value="ECO:0000314"/>
    <property type="project" value="UniProtKB"/>
</dbReference>
<dbReference type="GO" id="GO:0030509">
    <property type="term" value="P:BMP signaling pathway"/>
    <property type="evidence" value="ECO:0000250"/>
    <property type="project" value="UniProtKB"/>
</dbReference>
<dbReference type="GO" id="GO:0030154">
    <property type="term" value="P:cell differentiation"/>
    <property type="evidence" value="ECO:0000314"/>
    <property type="project" value="UniProtKB"/>
</dbReference>
<dbReference type="GO" id="GO:0007398">
    <property type="term" value="P:ectoderm development"/>
    <property type="evidence" value="ECO:0000304"/>
    <property type="project" value="UniProtKB"/>
</dbReference>
<dbReference type="GO" id="GO:0030514">
    <property type="term" value="P:negative regulation of BMP signaling pathway"/>
    <property type="evidence" value="ECO:0000318"/>
    <property type="project" value="GO_Central"/>
</dbReference>
<dbReference type="GO" id="GO:0043161">
    <property type="term" value="P:proteasome-mediated ubiquitin-dependent protein catabolic process"/>
    <property type="evidence" value="ECO:0000318"/>
    <property type="project" value="GO_Central"/>
</dbReference>
<dbReference type="GO" id="GO:0036211">
    <property type="term" value="P:protein modification process"/>
    <property type="evidence" value="ECO:0000304"/>
    <property type="project" value="UniProtKB"/>
</dbReference>
<dbReference type="GO" id="GO:0000209">
    <property type="term" value="P:protein polyubiquitination"/>
    <property type="evidence" value="ECO:0000250"/>
    <property type="project" value="UniProtKB"/>
</dbReference>
<dbReference type="GO" id="GO:0006511">
    <property type="term" value="P:ubiquitin-dependent protein catabolic process"/>
    <property type="evidence" value="ECO:0000250"/>
    <property type="project" value="UniProtKB"/>
</dbReference>
<dbReference type="CDD" id="cd08382">
    <property type="entry name" value="C2_Smurf-like"/>
    <property type="match status" value="1"/>
</dbReference>
<dbReference type="CDD" id="cd00078">
    <property type="entry name" value="HECTc"/>
    <property type="match status" value="1"/>
</dbReference>
<dbReference type="CDD" id="cd00201">
    <property type="entry name" value="WW"/>
    <property type="match status" value="2"/>
</dbReference>
<dbReference type="FunFam" id="2.20.70.10:FF:000017">
    <property type="entry name" value="E3 ubiquitin-protein ligase"/>
    <property type="match status" value="1"/>
</dbReference>
<dbReference type="FunFam" id="2.60.40.150:FF:000024">
    <property type="entry name" value="E3 ubiquitin-protein ligase"/>
    <property type="match status" value="1"/>
</dbReference>
<dbReference type="FunFam" id="3.30.2160.10:FF:000001">
    <property type="entry name" value="E3 ubiquitin-protein ligase NEDD4-like"/>
    <property type="match status" value="1"/>
</dbReference>
<dbReference type="FunFam" id="2.20.70.10:FF:000014">
    <property type="entry name" value="E3 ubiquitin-protein ligase SMURF1"/>
    <property type="match status" value="1"/>
</dbReference>
<dbReference type="FunFam" id="3.30.2410.10:FF:000014">
    <property type="entry name" value="E3 ubiquitin-protein ligase SMURF1"/>
    <property type="match status" value="1"/>
</dbReference>
<dbReference type="FunFam" id="3.90.1750.10:FF:000007">
    <property type="entry name" value="E3 ubiquitin-protein ligase SMURF2"/>
    <property type="match status" value="1"/>
</dbReference>
<dbReference type="Gene3D" id="2.20.70.10">
    <property type="match status" value="1"/>
</dbReference>
<dbReference type="Gene3D" id="2.60.40.150">
    <property type="entry name" value="C2 domain"/>
    <property type="match status" value="1"/>
</dbReference>
<dbReference type="Gene3D" id="3.30.2160.10">
    <property type="entry name" value="Hect, E3 ligase catalytic domain"/>
    <property type="match status" value="1"/>
</dbReference>
<dbReference type="Gene3D" id="3.30.2410.10">
    <property type="entry name" value="Hect, E3 ligase catalytic domain"/>
    <property type="match status" value="1"/>
</dbReference>
<dbReference type="Gene3D" id="3.90.1750.10">
    <property type="entry name" value="Hect, E3 ligase catalytic domains"/>
    <property type="match status" value="1"/>
</dbReference>
<dbReference type="InterPro" id="IPR000008">
    <property type="entry name" value="C2_dom"/>
</dbReference>
<dbReference type="InterPro" id="IPR035892">
    <property type="entry name" value="C2_domain_sf"/>
</dbReference>
<dbReference type="InterPro" id="IPR024928">
    <property type="entry name" value="E3_ub_ligase_SMURF1"/>
</dbReference>
<dbReference type="InterPro" id="IPR050409">
    <property type="entry name" value="E3_ubiq-protein_ligase"/>
</dbReference>
<dbReference type="InterPro" id="IPR000569">
    <property type="entry name" value="HECT_dom"/>
</dbReference>
<dbReference type="InterPro" id="IPR035983">
    <property type="entry name" value="Hect_E3_ubiquitin_ligase"/>
</dbReference>
<dbReference type="InterPro" id="IPR001202">
    <property type="entry name" value="WW_dom"/>
</dbReference>
<dbReference type="InterPro" id="IPR036020">
    <property type="entry name" value="WW_dom_sf"/>
</dbReference>
<dbReference type="PANTHER" id="PTHR11254:SF293">
    <property type="entry name" value="E3 UBIQUITIN-PROTEIN LIGASE SMURF1"/>
    <property type="match status" value="1"/>
</dbReference>
<dbReference type="PANTHER" id="PTHR11254">
    <property type="entry name" value="HECT DOMAIN UBIQUITIN-PROTEIN LIGASE"/>
    <property type="match status" value="1"/>
</dbReference>
<dbReference type="Pfam" id="PF00168">
    <property type="entry name" value="C2"/>
    <property type="match status" value="1"/>
</dbReference>
<dbReference type="Pfam" id="PF00632">
    <property type="entry name" value="HECT"/>
    <property type="match status" value="1"/>
</dbReference>
<dbReference type="Pfam" id="PF00397">
    <property type="entry name" value="WW"/>
    <property type="match status" value="2"/>
</dbReference>
<dbReference type="PIRSF" id="PIRSF001569">
    <property type="entry name" value="E3_ub_ligase_SMURF1"/>
    <property type="match status" value="1"/>
</dbReference>
<dbReference type="SMART" id="SM00239">
    <property type="entry name" value="C2"/>
    <property type="match status" value="1"/>
</dbReference>
<dbReference type="SMART" id="SM00119">
    <property type="entry name" value="HECTc"/>
    <property type="match status" value="1"/>
</dbReference>
<dbReference type="SMART" id="SM00456">
    <property type="entry name" value="WW"/>
    <property type="match status" value="2"/>
</dbReference>
<dbReference type="SUPFAM" id="SSF49562">
    <property type="entry name" value="C2 domain (Calcium/lipid-binding domain, CaLB)"/>
    <property type="match status" value="1"/>
</dbReference>
<dbReference type="SUPFAM" id="SSF56204">
    <property type="entry name" value="Hect, E3 ligase catalytic domain"/>
    <property type="match status" value="1"/>
</dbReference>
<dbReference type="SUPFAM" id="SSF51045">
    <property type="entry name" value="WW domain"/>
    <property type="match status" value="2"/>
</dbReference>
<dbReference type="PROSITE" id="PS50004">
    <property type="entry name" value="C2"/>
    <property type="match status" value="1"/>
</dbReference>
<dbReference type="PROSITE" id="PS50237">
    <property type="entry name" value="HECT"/>
    <property type="match status" value="1"/>
</dbReference>
<dbReference type="PROSITE" id="PS01159">
    <property type="entry name" value="WW_DOMAIN_1"/>
    <property type="match status" value="1"/>
</dbReference>
<dbReference type="PROSITE" id="PS50020">
    <property type="entry name" value="WW_DOMAIN_2"/>
    <property type="match status" value="2"/>
</dbReference>
<sequence>MSNVVTRRGGSSIRVRLTVLCAKNLAKRDFFRLPDPFAKIVVDGSGQCHSTDTVKNTLDPKWNQHYDLYVGKMDSITISIWNHKKIHKKQGAGFLGCVRLLSNAISRLKDTGYQRLDLCKLNPTDNDAVRGQIVVSLQTRDRIGTLGSVVDCRGLLDNEGALLEDTGPGRPLSCFMDEPAPYTDGPGAAGGGPGRLVESPGQEQRLQAQRVRGPEVREHVQTPQNRSHGFQSQDLPEGYEQRTTVQGQVYFLHTQTGVSTWHDPRIPRDLNSVNCDDLGSLPAGWEVRTTVSGRIYFVDHNNRTTQFTDPRLHHIINHQSQLKEPNHAIPVQSDGSLEDGDEFPAQRYERDLVQKLKVLRHELSLLQPQAGHCRVEVSREEIFEESYRQIMKMRPKDLKKRLMVKFRGEEGLDYGGVAREWLYLLCHEMLNPYYGLFQYSTDNIYTLQINPDSSINPDHLSYFHFVGRIMGLAVFHGHYINGGFTVPFYKQLLGKPIQLSDLESVDPELHKSLVWILENDITSVLDHTFCVEHNAFGRLLQHELKPNGKNLQVTEENKKEYVRLYVNWRFMRGIEAQFLALQKGFNELIPQHLLKPFEQKELELIIGGLDKIDISDWKANTRLKHCLANSNIVQWFWQAVESFDEERRARLLQFVTGSTRVPLQGFKALQGSTGAAGPRLFTIHLIDANTDNLPKAHTCFNRIDIPPYESYEKLYEKLLTAVEETSGFAVE</sequence>